<dbReference type="EMBL" id="CP000360">
    <property type="protein sequence ID" value="ABF39985.1"/>
    <property type="molecule type" value="Genomic_DNA"/>
</dbReference>
<dbReference type="RefSeq" id="WP_011521787.1">
    <property type="nucleotide sequence ID" value="NC_008009.1"/>
</dbReference>
<dbReference type="SMR" id="Q1IT15"/>
<dbReference type="STRING" id="204669.Acid345_0982"/>
<dbReference type="EnsemblBacteria" id="ABF39985">
    <property type="protein sequence ID" value="ABF39985"/>
    <property type="gene ID" value="Acid345_0982"/>
</dbReference>
<dbReference type="KEGG" id="aba:Acid345_0982"/>
<dbReference type="eggNOG" id="COG0443">
    <property type="taxonomic scope" value="Bacteria"/>
</dbReference>
<dbReference type="HOGENOM" id="CLU_005965_2_4_0"/>
<dbReference type="OrthoDB" id="9766019at2"/>
<dbReference type="Proteomes" id="UP000002432">
    <property type="component" value="Chromosome"/>
</dbReference>
<dbReference type="GO" id="GO:0005524">
    <property type="term" value="F:ATP binding"/>
    <property type="evidence" value="ECO:0007669"/>
    <property type="project" value="UniProtKB-UniRule"/>
</dbReference>
<dbReference type="GO" id="GO:0140662">
    <property type="term" value="F:ATP-dependent protein folding chaperone"/>
    <property type="evidence" value="ECO:0007669"/>
    <property type="project" value="InterPro"/>
</dbReference>
<dbReference type="GO" id="GO:0051082">
    <property type="term" value="F:unfolded protein binding"/>
    <property type="evidence" value="ECO:0007669"/>
    <property type="project" value="InterPro"/>
</dbReference>
<dbReference type="CDD" id="cd10234">
    <property type="entry name" value="ASKHA_NBD_HSP70_DnaK-like"/>
    <property type="match status" value="1"/>
</dbReference>
<dbReference type="FunFam" id="2.60.34.10:FF:000014">
    <property type="entry name" value="Chaperone protein DnaK HSP70"/>
    <property type="match status" value="1"/>
</dbReference>
<dbReference type="FunFam" id="1.20.1270.10:FF:000001">
    <property type="entry name" value="Molecular chaperone DnaK"/>
    <property type="match status" value="1"/>
</dbReference>
<dbReference type="FunFam" id="3.30.420.40:FF:000004">
    <property type="entry name" value="Molecular chaperone DnaK"/>
    <property type="match status" value="1"/>
</dbReference>
<dbReference type="FunFam" id="3.90.640.10:FF:000003">
    <property type="entry name" value="Molecular chaperone DnaK"/>
    <property type="match status" value="1"/>
</dbReference>
<dbReference type="Gene3D" id="1.20.1270.10">
    <property type="match status" value="1"/>
</dbReference>
<dbReference type="Gene3D" id="3.30.420.40">
    <property type="match status" value="2"/>
</dbReference>
<dbReference type="Gene3D" id="3.90.640.10">
    <property type="entry name" value="Actin, Chain A, domain 4"/>
    <property type="match status" value="1"/>
</dbReference>
<dbReference type="Gene3D" id="2.60.34.10">
    <property type="entry name" value="Substrate Binding Domain Of DNAk, Chain A, domain 1"/>
    <property type="match status" value="1"/>
</dbReference>
<dbReference type="HAMAP" id="MF_00332">
    <property type="entry name" value="DnaK"/>
    <property type="match status" value="1"/>
</dbReference>
<dbReference type="InterPro" id="IPR043129">
    <property type="entry name" value="ATPase_NBD"/>
</dbReference>
<dbReference type="InterPro" id="IPR012725">
    <property type="entry name" value="Chaperone_DnaK"/>
</dbReference>
<dbReference type="InterPro" id="IPR018181">
    <property type="entry name" value="Heat_shock_70_CS"/>
</dbReference>
<dbReference type="InterPro" id="IPR029048">
    <property type="entry name" value="HSP70_C_sf"/>
</dbReference>
<dbReference type="InterPro" id="IPR029047">
    <property type="entry name" value="HSP70_peptide-bd_sf"/>
</dbReference>
<dbReference type="InterPro" id="IPR013126">
    <property type="entry name" value="Hsp_70_fam"/>
</dbReference>
<dbReference type="NCBIfam" id="NF001413">
    <property type="entry name" value="PRK00290.1"/>
    <property type="match status" value="1"/>
</dbReference>
<dbReference type="NCBIfam" id="NF003520">
    <property type="entry name" value="PRK05183.1"/>
    <property type="match status" value="1"/>
</dbReference>
<dbReference type="NCBIfam" id="TIGR02350">
    <property type="entry name" value="prok_dnaK"/>
    <property type="match status" value="1"/>
</dbReference>
<dbReference type="PANTHER" id="PTHR19375">
    <property type="entry name" value="HEAT SHOCK PROTEIN 70KDA"/>
    <property type="match status" value="1"/>
</dbReference>
<dbReference type="Pfam" id="PF00012">
    <property type="entry name" value="HSP70"/>
    <property type="match status" value="1"/>
</dbReference>
<dbReference type="PRINTS" id="PR00301">
    <property type="entry name" value="HEATSHOCK70"/>
</dbReference>
<dbReference type="SUPFAM" id="SSF53067">
    <property type="entry name" value="Actin-like ATPase domain"/>
    <property type="match status" value="2"/>
</dbReference>
<dbReference type="SUPFAM" id="SSF100934">
    <property type="entry name" value="Heat shock protein 70kD (HSP70), C-terminal subdomain"/>
    <property type="match status" value="1"/>
</dbReference>
<dbReference type="SUPFAM" id="SSF100920">
    <property type="entry name" value="Heat shock protein 70kD (HSP70), peptide-binding domain"/>
    <property type="match status" value="1"/>
</dbReference>
<dbReference type="PROSITE" id="PS00297">
    <property type="entry name" value="HSP70_1"/>
    <property type="match status" value="1"/>
</dbReference>
<dbReference type="PROSITE" id="PS00329">
    <property type="entry name" value="HSP70_2"/>
    <property type="match status" value="1"/>
</dbReference>
<dbReference type="PROSITE" id="PS01036">
    <property type="entry name" value="HSP70_3"/>
    <property type="match status" value="1"/>
</dbReference>
<protein>
    <recommendedName>
        <fullName evidence="1">Chaperone protein DnaK</fullName>
    </recommendedName>
    <alternativeName>
        <fullName evidence="1">HSP70</fullName>
    </alternativeName>
    <alternativeName>
        <fullName evidence="1">Heat shock 70 kDa protein</fullName>
    </alternativeName>
    <alternativeName>
        <fullName evidence="1">Heat shock protein 70</fullName>
    </alternativeName>
</protein>
<keyword id="KW-0067">ATP-binding</keyword>
<keyword id="KW-0143">Chaperone</keyword>
<keyword id="KW-0547">Nucleotide-binding</keyword>
<keyword id="KW-0597">Phosphoprotein</keyword>
<keyword id="KW-1185">Reference proteome</keyword>
<keyword id="KW-0346">Stress response</keyword>
<proteinExistence type="inferred from homology"/>
<feature type="chain" id="PRO_1000059496" description="Chaperone protein DnaK">
    <location>
        <begin position="1"/>
        <end position="644"/>
    </location>
</feature>
<feature type="region of interest" description="Disordered" evidence="2">
    <location>
        <begin position="598"/>
        <end position="644"/>
    </location>
</feature>
<feature type="compositionally biased region" description="Low complexity" evidence="2">
    <location>
        <begin position="612"/>
        <end position="624"/>
    </location>
</feature>
<feature type="compositionally biased region" description="Acidic residues" evidence="2">
    <location>
        <begin position="632"/>
        <end position="644"/>
    </location>
</feature>
<feature type="modified residue" description="Phosphothreonine; by autocatalysis" evidence="1">
    <location>
        <position position="195"/>
    </location>
</feature>
<evidence type="ECO:0000255" key="1">
    <source>
        <dbReference type="HAMAP-Rule" id="MF_00332"/>
    </source>
</evidence>
<evidence type="ECO:0000256" key="2">
    <source>
        <dbReference type="SAM" id="MobiDB-lite"/>
    </source>
</evidence>
<reference key="1">
    <citation type="journal article" date="2009" name="Appl. Environ. Microbiol.">
        <title>Three genomes from the phylum Acidobacteria provide insight into the lifestyles of these microorganisms in soils.</title>
        <authorList>
            <person name="Ward N.L."/>
            <person name="Challacombe J.F."/>
            <person name="Janssen P.H."/>
            <person name="Henrissat B."/>
            <person name="Coutinho P.M."/>
            <person name="Wu M."/>
            <person name="Xie G."/>
            <person name="Haft D.H."/>
            <person name="Sait M."/>
            <person name="Badger J."/>
            <person name="Barabote R.D."/>
            <person name="Bradley B."/>
            <person name="Brettin T.S."/>
            <person name="Brinkac L.M."/>
            <person name="Bruce D."/>
            <person name="Creasy T."/>
            <person name="Daugherty S.C."/>
            <person name="Davidsen T.M."/>
            <person name="DeBoy R.T."/>
            <person name="Detter J.C."/>
            <person name="Dodson R.J."/>
            <person name="Durkin A.S."/>
            <person name="Ganapathy A."/>
            <person name="Gwinn-Giglio M."/>
            <person name="Han C.S."/>
            <person name="Khouri H."/>
            <person name="Kiss H."/>
            <person name="Kothari S.P."/>
            <person name="Madupu R."/>
            <person name="Nelson K.E."/>
            <person name="Nelson W.C."/>
            <person name="Paulsen I."/>
            <person name="Penn K."/>
            <person name="Ren Q."/>
            <person name="Rosovitz M.J."/>
            <person name="Selengut J.D."/>
            <person name="Shrivastava S."/>
            <person name="Sullivan S.A."/>
            <person name="Tapia R."/>
            <person name="Thompson L.S."/>
            <person name="Watkins K.L."/>
            <person name="Yang Q."/>
            <person name="Yu C."/>
            <person name="Zafar N."/>
            <person name="Zhou L."/>
            <person name="Kuske C.R."/>
        </authorList>
    </citation>
    <scope>NUCLEOTIDE SEQUENCE [LARGE SCALE GENOMIC DNA]</scope>
    <source>
        <strain>Ellin345</strain>
    </source>
</reference>
<organism>
    <name type="scientific">Koribacter versatilis (strain Ellin345)</name>
    <dbReference type="NCBI Taxonomy" id="204669"/>
    <lineage>
        <taxon>Bacteria</taxon>
        <taxon>Pseudomonadati</taxon>
        <taxon>Acidobacteriota</taxon>
        <taxon>Terriglobia</taxon>
        <taxon>Terriglobales</taxon>
        <taxon>Candidatus Korobacteraceae</taxon>
        <taxon>Candidatus Korobacter</taxon>
    </lineage>
</organism>
<sequence length="644" mass="69594">MAKIIGIDLGTTNSVVAVMEGGEPKVIPNEEGGRTTPSVVGFTKTGERLVGQVAKRQAITNPENTIFSIKRFMGRRYNEVNEEMKMVPYKVQQAGDHVAVLAQGKEYSPAEISAYILQKLKKAAEDYLGETVTEAVITVPAYFNDAQRQATKDAGKIAGLDVKRIINEPTAAALAYGLDKKKDETIAVYDFGGGTFDISILEVGEGVIEVKSTNGDTHLGGDNIDQRIVEWLIDEFKKKEGLDLRAKGNEMALQRLRDGAERAKIELSTTMETEINLPFITADASGPKHLVERLTRSKLEEMVRDLVDRSIEPCRQALKDAGIDASKIDEVVLVGGQTRMPRIQQVVKEFFGREPHRGVNPDEVVAIGAAIQGGVLKGEVKDLLLLDVTPLTLSIETLGGVATPMIPRNTTIPTKKTETFSTAADNQNSVEIHVLQGERPMAGQNRTLGKFHLTGLPPAPRGVPQIEVTFDIDANGILNVTAKDNATGKDQKITITSSSGLSKEEVERMAKEADAHAAEDKAKKEEIEARNQLDGMVYQIEKMLKENGDKISPSERGDVENALADSKKALETNDAKQMNAARERLTAASHKLAEAMYKQAAPGAGAPGAGPGPEAAGGAQQAQAEPKKDEGVIDAEYVDVDEKK</sequence>
<gene>
    <name evidence="1" type="primary">dnaK</name>
    <name type="ordered locus">Acid345_0982</name>
</gene>
<name>DNAK_KORVE</name>
<accession>Q1IT15</accession>
<comment type="function">
    <text evidence="1">Acts as a chaperone.</text>
</comment>
<comment type="induction">
    <text evidence="1">By stress conditions e.g. heat shock.</text>
</comment>
<comment type="similarity">
    <text evidence="1">Belongs to the heat shock protein 70 family.</text>
</comment>